<comment type="function">
    <text evidence="1 4 5 7">Plays a role in the elongation phase of viral strand displacement replication by unwinding the template in an ATP-independent fashion, employing its capacity to form multimers. Also enhances the rate of initiation. Released from template upon second strand synthesis. Assembles in complex with viral pTP, viral pol, host NFIA and host POU2F1/OCT1 on viral origin of replication. Covers the whole ssDNA genome during synthesis. The complementary strand synthesis induces its release from DNA template. May inhibit cellular transcription mediated by the interaction between host SRCAP and CBP.</text>
</comment>
<comment type="subunit">
    <text evidence="1 3 6">Homomultimerizes on viral ssDNA bound to pTP (PubMed:9135160). Forms an initiation complex with viral polymerase, pTP and hosts NFIA and POU2F1/OCT1 (By similarity). Interacts with host SRCAP (PubMed:11581372).</text>
</comment>
<comment type="subcellular location">
    <subcellularLocation>
        <location evidence="1">Host nucleus</location>
    </subcellularLocation>
    <text evidence="1">Accumulates in infected cells.</text>
</comment>
<comment type="domain">
    <text evidence="1 6">The C-terminal arm bridges DBP molecules together, thereby creating a chain.</text>
</comment>
<comment type="similarity">
    <text evidence="1">Belongs to the adenoviridae E2A DNA-binding protein family.</text>
</comment>
<protein>
    <recommendedName>
        <fullName evidence="1">DNA-binding protein</fullName>
        <shortName evidence="1">DBP</shortName>
    </recommendedName>
    <alternativeName>
        <fullName evidence="1">Early 2A protein</fullName>
    </alternativeName>
    <alternativeName>
        <fullName evidence="1">Early E2A DNA-binding protein</fullName>
    </alternativeName>
</protein>
<proteinExistence type="evidence at protein level"/>
<reference key="1">
    <citation type="journal article" date="1982" name="Nucleic Acids Res.">
        <title>Nucleotide sequence of the gene encoding adenovirus type 2 DNA binding protein.</title>
        <authorList>
            <person name="Kruijer W."/>
            <person name="van Schaik F.M.A."/>
            <person name="Sussenbach J.S."/>
        </authorList>
    </citation>
    <scope>NUCLEOTIDE SEQUENCE [GENOMIC DNA]</scope>
</reference>
<reference key="2">
    <citation type="journal article" date="1981" name="Nucleic Acids Res.">
        <title>The sequence of the 3' non-coding region of the hexon mRNA discloses a novel adenovirus gene.</title>
        <authorList>
            <person name="Akusjaervi G."/>
            <person name="Zabielski J."/>
            <person name="Perricaudet M."/>
            <person name="Pettersson U."/>
        </authorList>
    </citation>
    <scope>NUCLEOTIDE SEQUENCE [GENOMIC DNA] OF 438-529</scope>
</reference>
<reference key="3">
    <citation type="journal article" date="1989" name="J. Gen. Virol.">
        <title>Phosphorylation of adenovirus DNA-binding protein.</title>
        <authorList>
            <person name="Russell W.C."/>
            <person name="Webster A."/>
            <person name="Leith I.R."/>
            <person name="Kemp G.D."/>
        </authorList>
    </citation>
    <scope>PHOSPHORYLATION</scope>
</reference>
<reference key="4">
    <citation type="journal article" date="1997" name="EMBO J.">
        <title>Multimerization of the adenovirus DNA-binding protein is the driving force for ATP-independent DNA unwinding during strand displacement synthesis.</title>
        <authorList>
            <person name="Dekker J."/>
            <person name="Kanellopoulos P.N."/>
            <person name="Loonstra A.K."/>
            <person name="van Oosterhout J.A."/>
            <person name="Leonard K."/>
            <person name="Tucker P.A."/>
            <person name="van der Vliet P.C."/>
        </authorList>
    </citation>
    <scope>SUBUNIT</scope>
    <scope>DOMAIN</scope>
</reference>
<reference key="5">
    <citation type="journal article" date="1998" name="J. Mol. Biol.">
        <title>ATP-independent DNA unwinding by the adenovirus single-stranded DNA binding protein requires a flexible DNA binding loop.</title>
        <authorList>
            <person name="Dekker J."/>
            <person name="Kanellopoulos P.N."/>
            <person name="van Oosterhout J.A."/>
            <person name="Stier G."/>
            <person name="Tucker P.A."/>
            <person name="van der Vliet P.C."/>
        </authorList>
    </citation>
    <scope>FUNCTION</scope>
</reference>
<reference key="6">
    <citation type="journal article" date="2001" name="J. Virol.">
        <title>Adenovirus DNA binding protein interacts with the SNF2-related CBP activator protein (SrCap) and inhibits SrCap-mediated transcription.</title>
        <authorList>
            <person name="Xu X."/>
            <person name="Chackalaparampil I."/>
            <person name="Monroy M.A."/>
            <person name="Cannella M.T."/>
            <person name="Pesek E."/>
            <person name="Chrivia J."/>
            <person name="Yaciuk P."/>
        </authorList>
    </citation>
    <scope>INTERACTION WITH HOST SRCAP</scope>
</reference>
<reference key="7">
    <citation type="journal article" date="2003" name="Curr. Top. Microbiol. Immunol.">
        <title>Adenovirus DNA replication: protein priming, jumping back and the role of the DNA binding protein DBP.</title>
        <authorList>
            <person name="de Jong R.N."/>
            <person name="van der Vliet P.C."/>
            <person name="Brenkman A.B."/>
        </authorList>
    </citation>
    <scope>FUNCTION</scope>
</reference>
<reference key="8">
    <citation type="journal article" date="2003" name="Virology">
        <title>Adenovirus DNA binding protein inhibits SrCap-activated CBP and CREB-mediated transcription.</title>
        <authorList>
            <person name="Xu X."/>
            <person name="Tarakanova V."/>
            <person name="Chrivia J."/>
            <person name="Yaciuk P."/>
        </authorList>
    </citation>
    <scope>FUNCTION</scope>
</reference>
<keyword id="KW-0235">DNA replication</keyword>
<keyword id="KW-0238">DNA-binding</keyword>
<keyword id="KW-0244">Early protein</keyword>
<keyword id="KW-1048">Host nucleus</keyword>
<keyword id="KW-0945">Host-virus interaction</keyword>
<keyword id="KW-0479">Metal-binding</keyword>
<keyword id="KW-0597">Phosphoprotein</keyword>
<keyword id="KW-1185">Reference proteome</keyword>
<keyword id="KW-1194">Viral DNA replication</keyword>
<keyword id="KW-0862">Zinc</keyword>
<dbReference type="EMBL" id="J01917">
    <property type="protein sequence ID" value="AAA92217.1"/>
    <property type="molecule type" value="Genomic_DNA"/>
</dbReference>
<dbReference type="PIR" id="B03833">
    <property type="entry name" value="W7AD22"/>
</dbReference>
<dbReference type="RefSeq" id="AP_000177.1">
    <property type="nucleotide sequence ID" value="AC_000007.1"/>
</dbReference>
<dbReference type="SMR" id="P03264"/>
<dbReference type="IntAct" id="P03264">
    <property type="interactions" value="1"/>
</dbReference>
<dbReference type="MINT" id="P03264"/>
<dbReference type="iPTMnet" id="P03264"/>
<dbReference type="KEGG" id="vg:5739976"/>
<dbReference type="Proteomes" id="UP000008167">
    <property type="component" value="Segment"/>
</dbReference>
<dbReference type="GO" id="GO:0039715">
    <property type="term" value="C:nuclear viral factory"/>
    <property type="evidence" value="ECO:0000314"/>
    <property type="project" value="UniProtKB"/>
</dbReference>
<dbReference type="GO" id="GO:0019028">
    <property type="term" value="C:viral capsid"/>
    <property type="evidence" value="ECO:0007669"/>
    <property type="project" value="UniProtKB-UniRule"/>
</dbReference>
<dbReference type="GO" id="GO:0003677">
    <property type="term" value="F:DNA binding"/>
    <property type="evidence" value="ECO:0000314"/>
    <property type="project" value="UniProtKB"/>
</dbReference>
<dbReference type="GO" id="GO:0003697">
    <property type="term" value="F:single-stranded DNA binding"/>
    <property type="evidence" value="ECO:0000314"/>
    <property type="project" value="CAFA"/>
</dbReference>
<dbReference type="GO" id="GO:0008270">
    <property type="term" value="F:zinc ion binding"/>
    <property type="evidence" value="ECO:0007669"/>
    <property type="project" value="UniProtKB-UniRule"/>
</dbReference>
<dbReference type="GO" id="GO:0006260">
    <property type="term" value="P:DNA replication"/>
    <property type="evidence" value="ECO:0000314"/>
    <property type="project" value="CAFA"/>
</dbReference>
<dbReference type="GO" id="GO:0006351">
    <property type="term" value="P:DNA-templated transcription"/>
    <property type="evidence" value="ECO:0007669"/>
    <property type="project" value="UniProtKB-UniRule"/>
</dbReference>
<dbReference type="GO" id="GO:0045740">
    <property type="term" value="P:positive regulation of DNA replication"/>
    <property type="evidence" value="ECO:0007669"/>
    <property type="project" value="UniProtKB-UniRule"/>
</dbReference>
<dbReference type="GO" id="GO:0039693">
    <property type="term" value="P:viral DNA genome replication"/>
    <property type="evidence" value="ECO:0000314"/>
    <property type="project" value="UniProtKB"/>
</dbReference>
<dbReference type="GO" id="GO:0039687">
    <property type="term" value="P:viral DNA strand displacement replication"/>
    <property type="evidence" value="ECO:0007669"/>
    <property type="project" value="UniProtKB-UniRule"/>
</dbReference>
<dbReference type="FunFam" id="1.10.269.10:FF:000001">
    <property type="entry name" value="DNA-binding protein"/>
    <property type="match status" value="1"/>
</dbReference>
<dbReference type="FunFam" id="3.90.148.10:FF:000002">
    <property type="entry name" value="DNA-binding protein"/>
    <property type="match status" value="1"/>
</dbReference>
<dbReference type="Gene3D" id="3.90.148.10">
    <property type="entry name" value="Adenovirus DNA-binding, C-terminal domain superfamily/Adenovirus DNA-binding, zinc binding domain"/>
    <property type="match status" value="2"/>
</dbReference>
<dbReference type="Gene3D" id="1.10.269.10">
    <property type="entry name" value="Adenovirus DNA-binding, N-terminal domain"/>
    <property type="match status" value="1"/>
</dbReference>
<dbReference type="HAMAP" id="MF_04054">
    <property type="entry name" value="ADV_DNB2"/>
    <property type="match status" value="1"/>
</dbReference>
<dbReference type="InterPro" id="IPR036367">
    <property type="entry name" value="Ad_DBP_C_sf"/>
</dbReference>
<dbReference type="InterPro" id="IPR036368">
    <property type="entry name" value="ADBP_zn-bd_sf"/>
</dbReference>
<dbReference type="InterPro" id="IPR003176">
    <property type="entry name" value="Adenovirus_DNA-bd_a"/>
</dbReference>
<dbReference type="InterPro" id="IPR036362">
    <property type="entry name" value="Adenovirus_DNA-bd_N_sf"/>
</dbReference>
<dbReference type="InterPro" id="IPR005376">
    <property type="entry name" value="Adenovirus_DNA-bd_zn-bd"/>
</dbReference>
<dbReference type="InterPro" id="IPR037540">
    <property type="entry name" value="ADV_DNB2"/>
</dbReference>
<dbReference type="Pfam" id="PF02236">
    <property type="entry name" value="Viral_DNA_bi"/>
    <property type="match status" value="1"/>
</dbReference>
<dbReference type="Pfam" id="PF03728">
    <property type="entry name" value="Viral_DNA_Zn_bi"/>
    <property type="match status" value="2"/>
</dbReference>
<dbReference type="SUPFAM" id="SSF47724">
    <property type="entry name" value="Domain of early E2A DNA-binding protein, ADDBP"/>
    <property type="match status" value="1"/>
</dbReference>
<dbReference type="SUPFAM" id="SSF57917">
    <property type="entry name" value="Zn-binding domains of ADDBP"/>
    <property type="match status" value="2"/>
</dbReference>
<accession>P03264</accession>
<organism>
    <name type="scientific">Human adenovirus C serotype 2</name>
    <name type="common">HAdV-2</name>
    <name type="synonym">Human adenovirus 2</name>
    <dbReference type="NCBI Taxonomy" id="10515"/>
    <lineage>
        <taxon>Viruses</taxon>
        <taxon>Varidnaviria</taxon>
        <taxon>Bamfordvirae</taxon>
        <taxon>Preplasmiviricota</taxon>
        <taxon>Tectiliviricetes</taxon>
        <taxon>Rowavirales</taxon>
        <taxon>Adenoviridae</taxon>
        <taxon>Mastadenovirus</taxon>
        <taxon>Human mastadenovirus C</taxon>
    </lineage>
</organism>
<gene>
    <name evidence="1" type="primary">DBP</name>
</gene>
<evidence type="ECO:0000255" key="1">
    <source>
        <dbReference type="HAMAP-Rule" id="MF_04054"/>
    </source>
</evidence>
<evidence type="ECO:0000256" key="2">
    <source>
        <dbReference type="SAM" id="MobiDB-lite"/>
    </source>
</evidence>
<evidence type="ECO:0000269" key="3">
    <source>
    </source>
</evidence>
<evidence type="ECO:0000269" key="4">
    <source>
    </source>
</evidence>
<evidence type="ECO:0000269" key="5">
    <source>
    </source>
</evidence>
<evidence type="ECO:0000269" key="6">
    <source>
    </source>
</evidence>
<evidence type="ECO:0000269" key="7">
    <source>
    </source>
</evidence>
<name>DNB2_ADE02</name>
<feature type="chain" id="PRO_0000221677" description="DNA-binding protein">
    <location>
        <begin position="1"/>
        <end position="529"/>
    </location>
</feature>
<feature type="region of interest" description="Disordered" evidence="2">
    <location>
        <begin position="1"/>
        <end position="108"/>
    </location>
</feature>
<feature type="region of interest" description="Disordered" evidence="2">
    <location>
        <begin position="125"/>
        <end position="168"/>
    </location>
</feature>
<feature type="region of interest" description="Flexible loop" evidence="1">
    <location>
        <begin position="297"/>
        <end position="331"/>
    </location>
</feature>
<feature type="region of interest" description="C-terminal arm, DBP binding" evidence="1">
    <location>
        <begin position="513"/>
        <end position="529"/>
    </location>
</feature>
<feature type="compositionally biased region" description="Basic and acidic residues" evidence="2">
    <location>
        <begin position="1"/>
        <end position="17"/>
    </location>
</feature>
<feature type="compositionally biased region" description="Basic residues" evidence="2">
    <location>
        <begin position="129"/>
        <end position="139"/>
    </location>
</feature>
<feature type="compositionally biased region" description="Basic and acidic residues" evidence="2">
    <location>
        <begin position="140"/>
        <end position="155"/>
    </location>
</feature>
<feature type="compositionally biased region" description="Acidic residues" evidence="2">
    <location>
        <begin position="156"/>
        <end position="165"/>
    </location>
</feature>
<feature type="binding site" evidence="1">
    <location>
        <position position="284"/>
    </location>
    <ligand>
        <name>Zn(2+)</name>
        <dbReference type="ChEBI" id="CHEBI:29105"/>
        <label>1</label>
    </ligand>
</feature>
<feature type="binding site" evidence="1">
    <location>
        <position position="286"/>
    </location>
    <ligand>
        <name>Zn(2+)</name>
        <dbReference type="ChEBI" id="CHEBI:29105"/>
        <label>1</label>
    </ligand>
</feature>
<feature type="binding site" evidence="1">
    <location>
        <position position="339"/>
    </location>
    <ligand>
        <name>Zn(2+)</name>
        <dbReference type="ChEBI" id="CHEBI:29105"/>
        <label>1</label>
    </ligand>
</feature>
<feature type="binding site" evidence="1">
    <location>
        <position position="355"/>
    </location>
    <ligand>
        <name>Zn(2+)</name>
        <dbReference type="ChEBI" id="CHEBI:29105"/>
        <label>1</label>
    </ligand>
</feature>
<feature type="binding site" evidence="1">
    <location>
        <position position="396"/>
    </location>
    <ligand>
        <name>Zn(2+)</name>
        <dbReference type="ChEBI" id="CHEBI:29105"/>
        <label>2</label>
    </ligand>
</feature>
<feature type="binding site" evidence="1">
    <location>
        <position position="398"/>
    </location>
    <ligand>
        <name>Zn(2+)</name>
        <dbReference type="ChEBI" id="CHEBI:29105"/>
        <label>2</label>
    </ligand>
</feature>
<feature type="binding site" evidence="1">
    <location>
        <position position="450"/>
    </location>
    <ligand>
        <name>Zn(2+)</name>
        <dbReference type="ChEBI" id="CHEBI:29105"/>
        <label>2</label>
    </ligand>
</feature>
<feature type="binding site" evidence="1">
    <location>
        <position position="467"/>
    </location>
    <ligand>
        <name>Zn(2+)</name>
        <dbReference type="ChEBI" id="CHEBI:29105"/>
        <label>2</label>
    </ligand>
</feature>
<feature type="modified residue" description="Phosphotyrosine; by host" evidence="1">
    <location>
        <position position="195"/>
    </location>
</feature>
<sequence length="529" mass="59086">MASREEEQRETTPERGRGAARRPPTMEDVSSPSPSPPPPRAPPKKRLRRRLESEDEEDSSQDALVPRTPSPRPSTSTADLAIASKKKKKRPSPKPERPPSPEVIVDSEEEREDVALQMVGFSNPPVLIKHGKGGKRTVRRLNEDDPVARGMRTQEEKEESSEAESESTVINPLSLPIVSAWEKGMEAARALMDKYHVDNDLKANFKLLPDQVEALAAVCKTWLNEEHRGLQLTFTSNKTFVTMMGRFLQAYLQSFAEVTYKHHEPTGCALWLHRCAEIEGELKCLHGSIMINKEHVIEMDVTSENGQRALKEQSSKAKIVKNRWGRNVVQISNTDARCCVHDAACPANQFSGKSCGMFFSEGAKAQVAFKQIKAFMQALYPNAQTGHGHLLMPLRCECNSKPGHAPFLGRQLPKLTPFALSNAEDLDADLISDKSVLASVHHPALIVFQCCNPVYRNSRAQGGGPNCDFKISAPDLLNALVMVRSLWSENFTELPRMVVPEFKWSTKHQYRNVSLPVAHSDARQNPFDF</sequence>
<organismHost>
    <name type="scientific">Homo sapiens</name>
    <name type="common">Human</name>
    <dbReference type="NCBI Taxonomy" id="9606"/>
</organismHost>